<evidence type="ECO:0000255" key="1">
    <source>
        <dbReference type="PROSITE-ProRule" id="PRU00303"/>
    </source>
</evidence>
<evidence type="ECO:0000305" key="2"/>
<proteinExistence type="inferred from homology"/>
<dbReference type="EMBL" id="U00089">
    <property type="protein sequence ID" value="AAB95850.1"/>
    <property type="molecule type" value="Genomic_DNA"/>
</dbReference>
<dbReference type="PIR" id="S73528">
    <property type="entry name" value="S73528"/>
</dbReference>
<dbReference type="RefSeq" id="NP_110329.1">
    <property type="nucleotide sequence ID" value="NC_000912.1"/>
</dbReference>
<dbReference type="RefSeq" id="WP_010874997.1">
    <property type="nucleotide sequence ID" value="NZ_OU342337.1"/>
</dbReference>
<dbReference type="IntAct" id="P75157">
    <property type="interactions" value="2"/>
</dbReference>
<dbReference type="STRING" id="272634.MPN_640"/>
<dbReference type="EnsemblBacteria" id="AAB95850">
    <property type="protein sequence ID" value="AAB95850"/>
    <property type="gene ID" value="MPN_640"/>
</dbReference>
<dbReference type="KEGG" id="mpn:MPN_640"/>
<dbReference type="PATRIC" id="fig|272634.6.peg.703"/>
<dbReference type="HOGENOM" id="CLU_080699_0_0_14"/>
<dbReference type="BioCyc" id="MPNE272634:G1GJ3-1024-MONOMER"/>
<dbReference type="Proteomes" id="UP000000808">
    <property type="component" value="Chromosome"/>
</dbReference>
<dbReference type="GO" id="GO:0005886">
    <property type="term" value="C:plasma membrane"/>
    <property type="evidence" value="ECO:0007669"/>
    <property type="project" value="UniProtKB-SubCell"/>
</dbReference>
<dbReference type="InterPro" id="IPR001595">
    <property type="entry name" value="Lipoprotein_3"/>
</dbReference>
<dbReference type="Pfam" id="PF00938">
    <property type="entry name" value="Lipoprotein_3"/>
    <property type="match status" value="1"/>
</dbReference>
<dbReference type="PROSITE" id="PS51257">
    <property type="entry name" value="PROKAR_LIPOPROTEIN"/>
    <property type="match status" value="1"/>
</dbReference>
<comment type="subcellular location">
    <subcellularLocation>
        <location evidence="1">Cell membrane</location>
        <topology evidence="1">Lipid-anchor</topology>
    </subcellularLocation>
</comment>
<comment type="similarity">
    <text evidence="2">Belongs to the MG439/MG440 family.</text>
</comment>
<name>Y640_MYCPN</name>
<feature type="signal peptide" evidence="1">
    <location>
        <begin position="1"/>
        <end position="19"/>
    </location>
</feature>
<feature type="chain" id="PRO_0000014047" description="Uncharacterized lipoprotein MG439 homolog 5">
    <location>
        <begin position="20"/>
        <end position="300"/>
    </location>
</feature>
<feature type="lipid moiety-binding region" description="N-palmitoyl cysteine" evidence="1">
    <location>
        <position position="20"/>
    </location>
</feature>
<feature type="lipid moiety-binding region" description="S-diacylglycerol cysteine" evidence="1">
    <location>
        <position position="20"/>
    </location>
</feature>
<sequence>MKLKLLLIPLLGSSLLLSACSSATSQVISSLSSAQKYFEANKGELNKKNVINILKDGYNSDPNKTVNALLAGWKYTLMDQKLLERNLDASRFASAFGSTSKKDDITPNISEKSLFLADTFPGISSEIAKVFKVEKQTVSGFSYSWNSPKKFQVNIQIKMDGKIDESSKALIKSFLEGNSSGGKGSNGKNSIDESEYTGEKAKFTGNFIFTYTPPTGGARNFSDKSFDVPTSSINFPANVKIDVTTSHTKLNELLESNEQVKKMKSRQLTGKLFNLLPFFTTLCFNSFSPFTVFAVIFTIV</sequence>
<keyword id="KW-1003">Cell membrane</keyword>
<keyword id="KW-0449">Lipoprotein</keyword>
<keyword id="KW-0472">Membrane</keyword>
<keyword id="KW-0564">Palmitate</keyword>
<keyword id="KW-1185">Reference proteome</keyword>
<keyword id="KW-0732">Signal</keyword>
<organism>
    <name type="scientific">Mycoplasma pneumoniae (strain ATCC 29342 / M129 / Subtype 1)</name>
    <name type="common">Mycoplasmoides pneumoniae</name>
    <dbReference type="NCBI Taxonomy" id="272634"/>
    <lineage>
        <taxon>Bacteria</taxon>
        <taxon>Bacillati</taxon>
        <taxon>Mycoplasmatota</taxon>
        <taxon>Mycoplasmoidales</taxon>
        <taxon>Mycoplasmoidaceae</taxon>
        <taxon>Mycoplasmoides</taxon>
    </lineage>
</organism>
<gene>
    <name type="ordered locus">MPN_640</name>
    <name type="ORF">E09_orf300</name>
    <name type="ORF">MP202</name>
</gene>
<protein>
    <recommendedName>
        <fullName>Uncharacterized lipoprotein MG439 homolog 5</fullName>
    </recommendedName>
</protein>
<accession>P75157</accession>
<reference key="1">
    <citation type="journal article" date="1996" name="Nucleic Acids Res.">
        <title>Complete sequence analysis of the genome of the bacterium Mycoplasma pneumoniae.</title>
        <authorList>
            <person name="Himmelreich R."/>
            <person name="Hilbert H."/>
            <person name="Plagens H."/>
            <person name="Pirkl E."/>
            <person name="Li B.-C."/>
            <person name="Herrmann R."/>
        </authorList>
    </citation>
    <scope>NUCLEOTIDE SEQUENCE [LARGE SCALE GENOMIC DNA]</scope>
    <source>
        <strain>ATCC 29342 / M129 / Subtype 1</strain>
    </source>
</reference>